<organism>
    <name type="scientific">Berardius bairdii</name>
    <name type="common">Baird's beaked whale</name>
    <name type="synonym">North Pacific bottle-nosed whale</name>
    <dbReference type="NCBI Taxonomy" id="48742"/>
    <lineage>
        <taxon>Eukaryota</taxon>
        <taxon>Metazoa</taxon>
        <taxon>Chordata</taxon>
        <taxon>Craniata</taxon>
        <taxon>Vertebrata</taxon>
        <taxon>Euteleostomi</taxon>
        <taxon>Mammalia</taxon>
        <taxon>Eutheria</taxon>
        <taxon>Laurasiatheria</taxon>
        <taxon>Artiodactyla</taxon>
        <taxon>Whippomorpha</taxon>
        <taxon>Cetacea</taxon>
        <taxon>Odontoceti</taxon>
        <taxon>Ziphiidae</taxon>
        <taxon>Berardius</taxon>
    </lineage>
</organism>
<accession>Q70RV0</accession>
<proteinExistence type="inferred from homology"/>
<comment type="function">
    <text evidence="2">Component of the ubiquinol-cytochrome c reductase complex (complex III or cytochrome b-c1 complex) that is part of the mitochondrial respiratory chain. The b-c1 complex mediates electron transfer from ubiquinol to cytochrome c. Contributes to the generation of a proton gradient across the mitochondrial membrane that is then used for ATP synthesis.</text>
</comment>
<comment type="cofactor">
    <cofactor evidence="2">
        <name>heme b</name>
        <dbReference type="ChEBI" id="CHEBI:60344"/>
    </cofactor>
    <text evidence="2">Binds 2 heme b groups non-covalently.</text>
</comment>
<comment type="subunit">
    <text evidence="2">The cytochrome bc1 complex contains 11 subunits: 3 respiratory subunits (MT-CYB, CYC1 and UQCRFS1), 2 core proteins (UQCRC1 and UQCRC2) and 6 low-molecular weight proteins (UQCRH/QCR6, UQCRB/QCR7, UQCRQ/QCR8, UQCR10/QCR9, UQCR11/QCR10 and a cleavage product of UQCRFS1). This cytochrome bc1 complex then forms a dimer.</text>
</comment>
<comment type="subcellular location">
    <subcellularLocation>
        <location evidence="2">Mitochondrion inner membrane</location>
        <topology evidence="2">Multi-pass membrane protein</topology>
    </subcellularLocation>
</comment>
<comment type="miscellaneous">
    <text evidence="1">Heme 1 (or BL or b562) is low-potential and absorbs at about 562 nm, and heme 2 (or BH or b566) is high-potential and absorbs at about 566 nm.</text>
</comment>
<comment type="similarity">
    <text evidence="3 4">Belongs to the cytochrome b family.</text>
</comment>
<comment type="caution">
    <text evidence="2">The full-length protein contains only eight transmembrane helices, not nine as predicted by bioinformatics tools.</text>
</comment>
<keyword id="KW-0249">Electron transport</keyword>
<keyword id="KW-0349">Heme</keyword>
<keyword id="KW-0408">Iron</keyword>
<keyword id="KW-0472">Membrane</keyword>
<keyword id="KW-0479">Metal-binding</keyword>
<keyword id="KW-0496">Mitochondrion</keyword>
<keyword id="KW-0999">Mitochondrion inner membrane</keyword>
<keyword id="KW-0679">Respiratory chain</keyword>
<keyword id="KW-0812">Transmembrane</keyword>
<keyword id="KW-1133">Transmembrane helix</keyword>
<keyword id="KW-0813">Transport</keyword>
<keyword id="KW-0830">Ubiquinone</keyword>
<feature type="chain" id="PRO_0000254663" description="Cytochrome b">
    <location>
        <begin position="1"/>
        <end position="379"/>
    </location>
</feature>
<feature type="transmembrane region" description="Helical" evidence="2">
    <location>
        <begin position="33"/>
        <end position="53"/>
    </location>
</feature>
<feature type="transmembrane region" description="Helical" evidence="2">
    <location>
        <begin position="77"/>
        <end position="98"/>
    </location>
</feature>
<feature type="transmembrane region" description="Helical" evidence="2">
    <location>
        <begin position="113"/>
        <end position="133"/>
    </location>
</feature>
<feature type="transmembrane region" description="Helical" evidence="2">
    <location>
        <begin position="178"/>
        <end position="198"/>
    </location>
</feature>
<feature type="transmembrane region" description="Helical" evidence="2">
    <location>
        <begin position="226"/>
        <end position="246"/>
    </location>
</feature>
<feature type="transmembrane region" description="Helical" evidence="2">
    <location>
        <begin position="288"/>
        <end position="308"/>
    </location>
</feature>
<feature type="transmembrane region" description="Helical" evidence="2">
    <location>
        <begin position="320"/>
        <end position="340"/>
    </location>
</feature>
<feature type="transmembrane region" description="Helical" evidence="2">
    <location>
        <begin position="347"/>
        <end position="367"/>
    </location>
</feature>
<feature type="binding site" description="axial binding residue" evidence="2">
    <location>
        <position position="83"/>
    </location>
    <ligand>
        <name>heme b</name>
        <dbReference type="ChEBI" id="CHEBI:60344"/>
        <label>b562</label>
    </ligand>
    <ligandPart>
        <name>Fe</name>
        <dbReference type="ChEBI" id="CHEBI:18248"/>
    </ligandPart>
</feature>
<feature type="binding site" description="axial binding residue" evidence="2">
    <location>
        <position position="97"/>
    </location>
    <ligand>
        <name>heme b</name>
        <dbReference type="ChEBI" id="CHEBI:60344"/>
        <label>b566</label>
    </ligand>
    <ligandPart>
        <name>Fe</name>
        <dbReference type="ChEBI" id="CHEBI:18248"/>
    </ligandPart>
</feature>
<feature type="binding site" description="axial binding residue" evidence="2">
    <location>
        <position position="182"/>
    </location>
    <ligand>
        <name>heme b</name>
        <dbReference type="ChEBI" id="CHEBI:60344"/>
        <label>b562</label>
    </ligand>
    <ligandPart>
        <name>Fe</name>
        <dbReference type="ChEBI" id="CHEBI:18248"/>
    </ligandPart>
</feature>
<feature type="binding site" description="axial binding residue" evidence="2">
    <location>
        <position position="196"/>
    </location>
    <ligand>
        <name>heme b</name>
        <dbReference type="ChEBI" id="CHEBI:60344"/>
        <label>b566</label>
    </ligand>
    <ligandPart>
        <name>Fe</name>
        <dbReference type="ChEBI" id="CHEBI:18248"/>
    </ligandPart>
</feature>
<feature type="binding site" evidence="2">
    <location>
        <position position="201"/>
    </location>
    <ligand>
        <name>a ubiquinone</name>
        <dbReference type="ChEBI" id="CHEBI:16389"/>
    </ligand>
</feature>
<name>CYB_BERBI</name>
<evidence type="ECO:0000250" key="1"/>
<evidence type="ECO:0000250" key="2">
    <source>
        <dbReference type="UniProtKB" id="P00157"/>
    </source>
</evidence>
<evidence type="ECO:0000255" key="3">
    <source>
        <dbReference type="PROSITE-ProRule" id="PRU00967"/>
    </source>
</evidence>
<evidence type="ECO:0000255" key="4">
    <source>
        <dbReference type="PROSITE-ProRule" id="PRU00968"/>
    </source>
</evidence>
<gene>
    <name type="primary">MT-CYB</name>
    <name type="synonym">COB</name>
    <name type="synonym">CYTB</name>
    <name type="synonym">MTCYB</name>
</gene>
<dbReference type="EMBL" id="AJ554057">
    <property type="protein sequence ID" value="CAD87974.1"/>
    <property type="molecule type" value="Genomic_DNA"/>
</dbReference>
<dbReference type="RefSeq" id="NP_944697.1">
    <property type="nucleotide sequence ID" value="NC_005274.1"/>
</dbReference>
<dbReference type="SMR" id="Q70RV0"/>
<dbReference type="GeneID" id="2658776"/>
<dbReference type="CTD" id="4519"/>
<dbReference type="GO" id="GO:0005743">
    <property type="term" value="C:mitochondrial inner membrane"/>
    <property type="evidence" value="ECO:0007669"/>
    <property type="project" value="UniProtKB-SubCell"/>
</dbReference>
<dbReference type="GO" id="GO:0045275">
    <property type="term" value="C:respiratory chain complex III"/>
    <property type="evidence" value="ECO:0007669"/>
    <property type="project" value="InterPro"/>
</dbReference>
<dbReference type="GO" id="GO:0046872">
    <property type="term" value="F:metal ion binding"/>
    <property type="evidence" value="ECO:0007669"/>
    <property type="project" value="UniProtKB-KW"/>
</dbReference>
<dbReference type="GO" id="GO:0008121">
    <property type="term" value="F:ubiquinol-cytochrome-c reductase activity"/>
    <property type="evidence" value="ECO:0007669"/>
    <property type="project" value="InterPro"/>
</dbReference>
<dbReference type="GO" id="GO:0006122">
    <property type="term" value="P:mitochondrial electron transport, ubiquinol to cytochrome c"/>
    <property type="evidence" value="ECO:0007669"/>
    <property type="project" value="TreeGrafter"/>
</dbReference>
<dbReference type="CDD" id="cd00290">
    <property type="entry name" value="cytochrome_b_C"/>
    <property type="match status" value="1"/>
</dbReference>
<dbReference type="CDD" id="cd00284">
    <property type="entry name" value="Cytochrome_b_N"/>
    <property type="match status" value="1"/>
</dbReference>
<dbReference type="FunFam" id="1.20.810.10:FF:000002">
    <property type="entry name" value="Cytochrome b"/>
    <property type="match status" value="1"/>
</dbReference>
<dbReference type="Gene3D" id="1.20.810.10">
    <property type="entry name" value="Cytochrome Bc1 Complex, Chain C"/>
    <property type="match status" value="1"/>
</dbReference>
<dbReference type="InterPro" id="IPR005798">
    <property type="entry name" value="Cyt_b/b6_C"/>
</dbReference>
<dbReference type="InterPro" id="IPR036150">
    <property type="entry name" value="Cyt_b/b6_C_sf"/>
</dbReference>
<dbReference type="InterPro" id="IPR005797">
    <property type="entry name" value="Cyt_b/b6_N"/>
</dbReference>
<dbReference type="InterPro" id="IPR027387">
    <property type="entry name" value="Cytb/b6-like_sf"/>
</dbReference>
<dbReference type="InterPro" id="IPR030689">
    <property type="entry name" value="Cytochrome_b"/>
</dbReference>
<dbReference type="InterPro" id="IPR048260">
    <property type="entry name" value="Cytochrome_b_C_euk/bac"/>
</dbReference>
<dbReference type="InterPro" id="IPR048259">
    <property type="entry name" value="Cytochrome_b_N_euk/bac"/>
</dbReference>
<dbReference type="InterPro" id="IPR016174">
    <property type="entry name" value="Di-haem_cyt_TM"/>
</dbReference>
<dbReference type="PANTHER" id="PTHR19271">
    <property type="entry name" value="CYTOCHROME B"/>
    <property type="match status" value="1"/>
</dbReference>
<dbReference type="PANTHER" id="PTHR19271:SF16">
    <property type="entry name" value="CYTOCHROME B"/>
    <property type="match status" value="1"/>
</dbReference>
<dbReference type="Pfam" id="PF00032">
    <property type="entry name" value="Cytochrom_B_C"/>
    <property type="match status" value="1"/>
</dbReference>
<dbReference type="Pfam" id="PF00033">
    <property type="entry name" value="Cytochrome_B"/>
    <property type="match status" value="1"/>
</dbReference>
<dbReference type="PIRSF" id="PIRSF038885">
    <property type="entry name" value="COB"/>
    <property type="match status" value="1"/>
</dbReference>
<dbReference type="SUPFAM" id="SSF81648">
    <property type="entry name" value="a domain/subunit of cytochrome bc1 complex (Ubiquinol-cytochrome c reductase)"/>
    <property type="match status" value="1"/>
</dbReference>
<dbReference type="SUPFAM" id="SSF81342">
    <property type="entry name" value="Transmembrane di-heme cytochromes"/>
    <property type="match status" value="1"/>
</dbReference>
<dbReference type="PROSITE" id="PS51003">
    <property type="entry name" value="CYTB_CTER"/>
    <property type="match status" value="1"/>
</dbReference>
<dbReference type="PROSITE" id="PS51002">
    <property type="entry name" value="CYTB_NTER"/>
    <property type="match status" value="1"/>
</dbReference>
<sequence length="379" mass="42947">MINIRKTHPLMKTINNAFIDLPTPSNISSWWNFGSLLGLCLIMQILTGLFLAMHYTPDTTTAFSSVAHICRDVNYGWIIRYLHANGASMFFICLYAHVGRSLYYGSYTFQETWNIGVILLFTVMATAFVGYVLPWGQMSFWGATVITNLLSAIPYIGTTLVEWIWGGFSVDKATLTRFFAFHFILPFIILTLAAVHLLFLHETGSNNPTGIPSNMDKIPFHPYYTIKDILGALLLILALLTLTLFAPDLLGEPDNYTPANPLSTPTHIKPEWYFLFAYAILRSVPNKLGGVLALLLSILILLFIPLLHTSKQRSMMFRPFSQFFFWLLIADFLTLTWIGSQPVEYPYMTVGQLASILYFLLILVLMPMAGLIENKLLKW</sequence>
<geneLocation type="mitochondrion"/>
<protein>
    <recommendedName>
        <fullName>Cytochrome b</fullName>
    </recommendedName>
    <alternativeName>
        <fullName>Complex III subunit 3</fullName>
    </alternativeName>
    <alternativeName>
        <fullName>Complex III subunit III</fullName>
    </alternativeName>
    <alternativeName>
        <fullName>Cytochrome b-c1 complex subunit 3</fullName>
    </alternativeName>
    <alternativeName>
        <fullName>Ubiquinol-cytochrome-c reductase complex cytochrome b subunit</fullName>
    </alternativeName>
</protein>
<reference key="1">
    <citation type="journal article" date="2004" name="Gene">
        <title>Mitogenomic analyses provide new insights into cetacean origin and evolution.</title>
        <authorList>
            <person name="Arnason U."/>
            <person name="Gullberg A."/>
            <person name="Janke A."/>
        </authorList>
    </citation>
    <scope>NUCLEOTIDE SEQUENCE [GENOMIC DNA]</scope>
</reference>